<reference key="1">
    <citation type="journal article" date="2001" name="J. Biol. Chem.">
        <title>Human glial cell line-derived neurotrophic factor receptor alpha4 is the receptor for persephin and is predominantly expressed in normal and malignant thyroid medullary cells.</title>
        <authorList>
            <person name="Lindahl M."/>
            <person name="Poteryaev D."/>
            <person name="Yu L."/>
            <person name="Arumae U."/>
            <person name="Timmusk T."/>
            <person name="Bongarzone I."/>
            <person name="Aiello A."/>
            <person name="Pierotti M.A."/>
            <person name="Airaksinen M.S."/>
            <person name="Saarma M."/>
        </authorList>
    </citation>
    <scope>NUCLEOTIDE SEQUENCE [MRNA] (ISOFORMS GFRALPHA4A; GFRALPHA4B AND GFRALPHA4C)</scope>
    <scope>FUNCTION</scope>
    <scope>SUBCELLULAR LOCATION</scope>
    <scope>TISSUE SPECIFICITY</scope>
    <scope>GPI-ANCHOR</scope>
    <source>
        <tissue>Thyroid</tissue>
    </source>
</reference>
<reference key="2">
    <citation type="submission" date="2000-04" db="EMBL/GenBank/DDBJ databases">
        <authorList>
            <person name="Zhou B."/>
            <person name="Levinson B."/>
            <person name="Gitschier J."/>
        </authorList>
    </citation>
    <scope>NUCLEOTIDE SEQUENCE (ISOFORM GFRALPHA4A)</scope>
</reference>
<reference key="3">
    <citation type="journal article" date="2001" name="Nature">
        <title>The DNA sequence and comparative analysis of human chromosome 20.</title>
        <authorList>
            <person name="Deloukas P."/>
            <person name="Matthews L.H."/>
            <person name="Ashurst J.L."/>
            <person name="Burton J."/>
            <person name="Gilbert J.G.R."/>
            <person name="Jones M."/>
            <person name="Stavrides G."/>
            <person name="Almeida J.P."/>
            <person name="Babbage A.K."/>
            <person name="Bagguley C.L."/>
            <person name="Bailey J."/>
            <person name="Barlow K.F."/>
            <person name="Bates K.N."/>
            <person name="Beard L.M."/>
            <person name="Beare D.M."/>
            <person name="Beasley O.P."/>
            <person name="Bird C.P."/>
            <person name="Blakey S.E."/>
            <person name="Bridgeman A.M."/>
            <person name="Brown A.J."/>
            <person name="Buck D."/>
            <person name="Burrill W.D."/>
            <person name="Butler A.P."/>
            <person name="Carder C."/>
            <person name="Carter N.P."/>
            <person name="Chapman J.C."/>
            <person name="Clamp M."/>
            <person name="Clark G."/>
            <person name="Clark L.N."/>
            <person name="Clark S.Y."/>
            <person name="Clee C.M."/>
            <person name="Clegg S."/>
            <person name="Cobley V.E."/>
            <person name="Collier R.E."/>
            <person name="Connor R.E."/>
            <person name="Corby N.R."/>
            <person name="Coulson A."/>
            <person name="Coville G.J."/>
            <person name="Deadman R."/>
            <person name="Dhami P.D."/>
            <person name="Dunn M."/>
            <person name="Ellington A.G."/>
            <person name="Frankland J.A."/>
            <person name="Fraser A."/>
            <person name="French L."/>
            <person name="Garner P."/>
            <person name="Grafham D.V."/>
            <person name="Griffiths C."/>
            <person name="Griffiths M.N.D."/>
            <person name="Gwilliam R."/>
            <person name="Hall R.E."/>
            <person name="Hammond S."/>
            <person name="Harley J.L."/>
            <person name="Heath P.D."/>
            <person name="Ho S."/>
            <person name="Holden J.L."/>
            <person name="Howden P.J."/>
            <person name="Huckle E."/>
            <person name="Hunt A.R."/>
            <person name="Hunt S.E."/>
            <person name="Jekosch K."/>
            <person name="Johnson C.M."/>
            <person name="Johnson D."/>
            <person name="Kay M.P."/>
            <person name="Kimberley A.M."/>
            <person name="King A."/>
            <person name="Knights A."/>
            <person name="Laird G.K."/>
            <person name="Lawlor S."/>
            <person name="Lehvaeslaiho M.H."/>
            <person name="Leversha M.A."/>
            <person name="Lloyd C."/>
            <person name="Lloyd D.M."/>
            <person name="Lovell J.D."/>
            <person name="Marsh V.L."/>
            <person name="Martin S.L."/>
            <person name="McConnachie L.J."/>
            <person name="McLay K."/>
            <person name="McMurray A.A."/>
            <person name="Milne S.A."/>
            <person name="Mistry D."/>
            <person name="Moore M.J.F."/>
            <person name="Mullikin J.C."/>
            <person name="Nickerson T."/>
            <person name="Oliver K."/>
            <person name="Parker A."/>
            <person name="Patel R."/>
            <person name="Pearce T.A.V."/>
            <person name="Peck A.I."/>
            <person name="Phillimore B.J.C.T."/>
            <person name="Prathalingam S.R."/>
            <person name="Plumb R.W."/>
            <person name="Ramsay H."/>
            <person name="Rice C.M."/>
            <person name="Ross M.T."/>
            <person name="Scott C.E."/>
            <person name="Sehra H.K."/>
            <person name="Shownkeen R."/>
            <person name="Sims S."/>
            <person name="Skuce C.D."/>
            <person name="Smith M.L."/>
            <person name="Soderlund C."/>
            <person name="Steward C.A."/>
            <person name="Sulston J.E."/>
            <person name="Swann R.M."/>
            <person name="Sycamore N."/>
            <person name="Taylor R."/>
            <person name="Tee L."/>
            <person name="Thomas D.W."/>
            <person name="Thorpe A."/>
            <person name="Tracey A."/>
            <person name="Tromans A.C."/>
            <person name="Vaudin M."/>
            <person name="Wall M."/>
            <person name="Wallis J.M."/>
            <person name="Whitehead S.L."/>
            <person name="Whittaker P."/>
            <person name="Willey D.L."/>
            <person name="Williams L."/>
            <person name="Williams S.A."/>
            <person name="Wilming L."/>
            <person name="Wray P.W."/>
            <person name="Hubbard T."/>
            <person name="Durbin R.M."/>
            <person name="Bentley D.R."/>
            <person name="Beck S."/>
            <person name="Rogers J."/>
        </authorList>
    </citation>
    <scope>NUCLEOTIDE SEQUENCE [LARGE SCALE GENOMIC DNA]</scope>
</reference>
<reference key="4">
    <citation type="journal article" date="2013" name="Cell Rep.">
        <title>SorLA controls neurotrophic activity by sorting of GDNF and its receptors GFRalpha1 and RET.</title>
        <authorList>
            <person name="Glerup S."/>
            <person name="Lume M."/>
            <person name="Olsen D."/>
            <person name="Nyengaard J.R."/>
            <person name="Vaegter C.B."/>
            <person name="Gustafsen C."/>
            <person name="Christensen E.I."/>
            <person name="Kjolby M."/>
            <person name="Hay-Schmidt A."/>
            <person name="Bender D."/>
            <person name="Madsen P."/>
            <person name="Saarma M."/>
            <person name="Nykjaer A."/>
            <person name="Petersen C.M."/>
        </authorList>
    </citation>
    <scope>INTERACTION WITH SORL1</scope>
</reference>
<evidence type="ECO:0000255" key="1"/>
<evidence type="ECO:0000256" key="2">
    <source>
        <dbReference type="SAM" id="MobiDB-lite"/>
    </source>
</evidence>
<evidence type="ECO:0000269" key="3">
    <source>
    </source>
</evidence>
<evidence type="ECO:0000269" key="4">
    <source>
    </source>
</evidence>
<evidence type="ECO:0000303" key="5">
    <source>
    </source>
</evidence>
<evidence type="ECO:0000305" key="6"/>
<organism>
    <name type="scientific">Homo sapiens</name>
    <name type="common">Human</name>
    <dbReference type="NCBI Taxonomy" id="9606"/>
    <lineage>
        <taxon>Eukaryota</taxon>
        <taxon>Metazoa</taxon>
        <taxon>Chordata</taxon>
        <taxon>Craniata</taxon>
        <taxon>Vertebrata</taxon>
        <taxon>Euteleostomi</taxon>
        <taxon>Mammalia</taxon>
        <taxon>Eutheria</taxon>
        <taxon>Euarchontoglires</taxon>
        <taxon>Primates</taxon>
        <taxon>Haplorrhini</taxon>
        <taxon>Catarrhini</taxon>
        <taxon>Hominidae</taxon>
        <taxon>Homo</taxon>
    </lineage>
</organism>
<gene>
    <name type="primary">GFRA4</name>
</gene>
<protein>
    <recommendedName>
        <fullName evidence="5">GDNF family receptor alpha-4</fullName>
        <shortName>GDNF receptor alpha-4</shortName>
        <shortName>GDNFR-alpha-4</shortName>
        <shortName>GFR-alpha-4</shortName>
    </recommendedName>
    <alternativeName>
        <fullName>Persephin receptor</fullName>
    </alternativeName>
</protein>
<accession>Q9GZZ7</accession>
<accession>Q5JT74</accession>
<accession>Q9H191</accession>
<accession>Q9H192</accession>
<feature type="signal peptide" evidence="1">
    <location>
        <begin position="1"/>
        <end position="20"/>
    </location>
</feature>
<feature type="chain" id="PRO_0000010793" description="GDNF family receptor alpha-4">
    <location>
        <begin position="21"/>
        <end position="278"/>
    </location>
</feature>
<feature type="propeptide" id="PRO_0000010794" description="Removed in mature form" evidence="1">
    <location>
        <begin position="279"/>
        <end position="299"/>
    </location>
</feature>
<feature type="region of interest" description="Disordered" evidence="2">
    <location>
        <begin position="145"/>
        <end position="198"/>
    </location>
</feature>
<feature type="compositionally biased region" description="Low complexity" evidence="2">
    <location>
        <begin position="177"/>
        <end position="198"/>
    </location>
</feature>
<feature type="lipid moiety-binding region" description="GPI-anchor amidated glycine" evidence="1">
    <location>
        <position position="278"/>
    </location>
</feature>
<feature type="glycosylation site" description="N-linked (GlcNAc...) asparagine" evidence="1">
    <location>
        <position position="208"/>
    </location>
</feature>
<feature type="splice variant" id="VSP_007223" description="In isoform GFRalpha4a." evidence="5">
    <original>CARAAAGPWRGWGRGLSPAHRPPAAQASPPGLSGLVHPSAQRPRRLPAGPGRPLPARLRGPRGVPA</original>
    <variation>PRLLAFQVSCTPAPSAPDGCLLDQGARCLRAYAGLV</variation>
    <location>
        <begin position="132"/>
        <end position="197"/>
    </location>
</feature>
<feature type="splice variant" id="VSP_007224" description="In isoform GFRalpha4c." evidence="5">
    <original>CARAAAGPWRGWGRGLSPAHRPPAAQASPPGLSGLVHPSAQRPRRLPAGPG</original>
    <variation>PRLLAFQVSCTPAPSAPDGCLLDQGARCLRAYAGLVGSPQAPPSPLTTWTT</variation>
    <location>
        <begin position="132"/>
        <end position="182"/>
    </location>
</feature>
<feature type="splice variant" id="VSP_007225" description="In isoform GFRalpha4c." evidence="5">
    <location>
        <begin position="183"/>
        <end position="299"/>
    </location>
</feature>
<keyword id="KW-0025">Alternative splicing</keyword>
<keyword id="KW-1003">Cell membrane</keyword>
<keyword id="KW-0325">Glycoprotein</keyword>
<keyword id="KW-0336">GPI-anchor</keyword>
<keyword id="KW-0449">Lipoprotein</keyword>
<keyword id="KW-0472">Membrane</keyword>
<keyword id="KW-0675">Receptor</keyword>
<keyword id="KW-1185">Reference proteome</keyword>
<keyword id="KW-0964">Secreted</keyword>
<keyword id="KW-0732">Signal</keyword>
<name>GFRA4_HUMAN</name>
<comment type="function">
    <text evidence="3">Receptor for persephin (PSPN), a growth factor that exhibits neurotrophic activity on mesencephalic dopaminergic and motor neurons (PubMed:11116144). Acts by binding to its coreceptor, GFRA4, leading to autophosphorylation and activation of the RET receptor (PubMed:11116144). May be important in C-cell development and, in the postnatal development of the adrenal medulla (PubMed:11116144).</text>
</comment>
<comment type="subunit">
    <text evidence="3 4">Interacts with ARTN ligand and RET: forms a 2:2:2 ternary complex composed of ARTN ligand, GFRA3 and RET receptor (PubMed:11116144). Interacts with SORL1 (PubMed:23333276).</text>
</comment>
<comment type="subcellular location">
    <molecule>Isoform GFRalpha4a</molecule>
    <subcellularLocation>
        <location evidence="3">Cell membrane</location>
        <topology evidence="3">Lipid-anchor</topology>
        <topology evidence="3">GPI-anchor</topology>
    </subcellularLocation>
</comment>
<comment type="subcellular location">
    <molecule>Isoform GFRalpha4b</molecule>
    <subcellularLocation>
        <location evidence="3">Cell membrane</location>
        <topology evidence="3">Lipid-anchor</topology>
        <topology evidence="3">GPI-anchor</topology>
    </subcellularLocation>
</comment>
<comment type="subcellular location">
    <molecule>Isoform GFRalpha4c</molecule>
    <subcellularLocation>
        <location evidence="3">Secreted</location>
    </subcellularLocation>
</comment>
<comment type="alternative products">
    <event type="alternative splicing"/>
    <isoform>
        <id>Q9GZZ7-1</id>
        <name>GFRalpha4b</name>
        <sequence type="displayed"/>
    </isoform>
    <isoform>
        <id>Q9GZZ7-2</id>
        <name>GFRalpha4a</name>
        <sequence type="described" ref="VSP_007223"/>
    </isoform>
    <isoform>
        <id>Q9GZZ7-3</id>
        <name>GFRalpha4c</name>
        <sequence type="described" ref="VSP_007224 VSP_007225"/>
    </isoform>
    <text>Additional isoforms seem to exist.</text>
</comment>
<comment type="tissue specificity">
    <text evidence="3">Predominantly expressed in the adult thyroid gland. Low levels also found in fetal adrenal and thyroid glands.</text>
</comment>
<comment type="similarity">
    <text evidence="6">Belongs to the GDNFR family.</text>
</comment>
<sequence length="299" mass="31670">MVRCLGPALLLLLLLGSASSVGGNRCVDAAEACTADARCQRLRSEYVAQCLGRAAQGGCPRARCRRALRRFFARGPPALTHALLFCPCAGPACAERRRQTFVPSCAFSGPGPAPPSCLEPLNFCERSRVCRCARAAAGPWRGWGRGLSPAHRPPAAQASPPGLSGLVHPSAQRPRRLPAGPGRPLPARLRGPRGVPAGTAVTPNYVDNVSARVAPWCDCGASGNRREDCEAFRGLFTRNRCLDGAIQAFASGWPPVLLDQLNPQGDPEHSLLQVSSTGRALERRSLLSILPVLALPALL</sequence>
<proteinExistence type="evidence at protein level"/>
<dbReference type="EMBL" id="AJ291673">
    <property type="protein sequence ID" value="CAC19690.1"/>
    <property type="molecule type" value="mRNA"/>
</dbReference>
<dbReference type="EMBL" id="AJ291674">
    <property type="protein sequence ID" value="CAC19691.1"/>
    <property type="molecule type" value="mRNA"/>
</dbReference>
<dbReference type="EMBL" id="AJ291675">
    <property type="protein sequence ID" value="CAC19692.1"/>
    <property type="molecule type" value="mRNA"/>
</dbReference>
<dbReference type="EMBL" id="AF253318">
    <property type="protein sequence ID" value="AAG25925.1"/>
    <property type="molecule type" value="mRNA"/>
</dbReference>
<dbReference type="EMBL" id="AL356755">
    <property type="status" value="NOT_ANNOTATED_CDS"/>
    <property type="molecule type" value="Genomic_DNA"/>
</dbReference>
<dbReference type="CCDS" id="CCDS13055.1">
    <molecule id="Q9GZZ7-2"/>
</dbReference>
<dbReference type="CCDS" id="CCDS13056.1">
    <molecule id="Q9GZZ7-1"/>
</dbReference>
<dbReference type="RefSeq" id="NP_071422.1">
    <molecule id="Q9GZZ7-2"/>
    <property type="nucleotide sequence ID" value="NM_022139.4"/>
</dbReference>
<dbReference type="RefSeq" id="NP_665705.1">
    <molecule id="Q9GZZ7-1"/>
    <property type="nucleotide sequence ID" value="NM_145762.3"/>
</dbReference>
<dbReference type="RefSeq" id="XP_005260850.1">
    <molecule id="Q9GZZ7-3"/>
    <property type="nucleotide sequence ID" value="XM_005260793.2"/>
</dbReference>
<dbReference type="RefSeq" id="XP_054179807.1">
    <molecule id="Q9GZZ7-3"/>
    <property type="nucleotide sequence ID" value="XM_054323832.1"/>
</dbReference>
<dbReference type="SMR" id="Q9GZZ7"/>
<dbReference type="BioGRID" id="122057">
    <property type="interactions" value="1"/>
</dbReference>
<dbReference type="CORUM" id="Q9GZZ7"/>
<dbReference type="FunCoup" id="Q9GZZ7">
    <property type="interactions" value="4"/>
</dbReference>
<dbReference type="STRING" id="9606.ENSP00000313423"/>
<dbReference type="GlyCosmos" id="Q9GZZ7">
    <property type="glycosylation" value="1 site, No reported glycans"/>
</dbReference>
<dbReference type="GlyGen" id="Q9GZZ7">
    <property type="glycosylation" value="1 site"/>
</dbReference>
<dbReference type="BioMuta" id="GFRA4"/>
<dbReference type="DMDM" id="30173123"/>
<dbReference type="PaxDb" id="9606-ENSP00000313423"/>
<dbReference type="PeptideAtlas" id="Q9GZZ7"/>
<dbReference type="ABCD" id="Q9GZZ7">
    <property type="antibodies" value="3 sequenced antibodies"/>
</dbReference>
<dbReference type="Antibodypedia" id="23585">
    <property type="antibodies" value="267 antibodies from 26 providers"/>
</dbReference>
<dbReference type="DNASU" id="64096"/>
<dbReference type="Ensembl" id="ENST00000290417.7">
    <molecule id="Q9GZZ7-2"/>
    <property type="protein sequence ID" value="ENSP00000290417.2"/>
    <property type="gene ID" value="ENSG00000125861.16"/>
</dbReference>
<dbReference type="Ensembl" id="ENST00000319242.8">
    <molecule id="Q9GZZ7-1"/>
    <property type="protein sequence ID" value="ENSP00000313423.3"/>
    <property type="gene ID" value="ENSG00000125861.16"/>
</dbReference>
<dbReference type="Ensembl" id="ENST00000477160.1">
    <molecule id="Q9GZZ7-3"/>
    <property type="protein sequence ID" value="ENSP00000435801.1"/>
    <property type="gene ID" value="ENSG00000125861.16"/>
</dbReference>
<dbReference type="GeneID" id="64096"/>
<dbReference type="KEGG" id="hsa:64096"/>
<dbReference type="MANE-Select" id="ENST00000290417.7">
    <molecule id="Q9GZZ7-2"/>
    <property type="protein sequence ID" value="ENSP00000290417.2"/>
    <property type="RefSeq nucleotide sequence ID" value="NM_022139.4"/>
    <property type="RefSeq protein sequence ID" value="NP_071422.1"/>
</dbReference>
<dbReference type="UCSC" id="uc002win.3">
    <molecule id="Q9GZZ7-1"/>
    <property type="organism name" value="human"/>
</dbReference>
<dbReference type="AGR" id="HGNC:13821"/>
<dbReference type="CTD" id="64096"/>
<dbReference type="DisGeNET" id="64096"/>
<dbReference type="GeneCards" id="GFRA4"/>
<dbReference type="HGNC" id="HGNC:13821">
    <property type="gene designation" value="GFRA4"/>
</dbReference>
<dbReference type="HPA" id="ENSG00000125861">
    <property type="expression patterns" value="Tissue enhanced (thyroid)"/>
</dbReference>
<dbReference type="MIM" id="618679">
    <property type="type" value="gene"/>
</dbReference>
<dbReference type="neXtProt" id="NX_Q9GZZ7"/>
<dbReference type="OpenTargets" id="ENSG00000125861"/>
<dbReference type="PharmGKB" id="PA28656"/>
<dbReference type="VEuPathDB" id="HostDB:ENSG00000125861"/>
<dbReference type="eggNOG" id="ENOG502QSGA">
    <property type="taxonomic scope" value="Eukaryota"/>
</dbReference>
<dbReference type="GeneTree" id="ENSGT00940000160491"/>
<dbReference type="HOGENOM" id="CLU_040179_2_0_1"/>
<dbReference type="InParanoid" id="Q9GZZ7"/>
<dbReference type="OMA" id="AFDSGWP"/>
<dbReference type="OrthoDB" id="10047040at2759"/>
<dbReference type="PAN-GO" id="Q9GZZ7">
    <property type="GO annotations" value="4 GO annotations based on evolutionary models"/>
</dbReference>
<dbReference type="PhylomeDB" id="Q9GZZ7"/>
<dbReference type="TreeFam" id="TF331647"/>
<dbReference type="PathwayCommons" id="Q9GZZ7"/>
<dbReference type="Reactome" id="R-HSA-419037">
    <property type="pathway name" value="NCAM1 interactions"/>
</dbReference>
<dbReference type="Reactome" id="R-HSA-5673001">
    <property type="pathway name" value="RAF/MAP kinase cascade"/>
</dbReference>
<dbReference type="Reactome" id="R-HSA-8853659">
    <property type="pathway name" value="RET signaling"/>
</dbReference>
<dbReference type="SignaLink" id="Q9GZZ7"/>
<dbReference type="SIGNOR" id="Q9GZZ7"/>
<dbReference type="BioGRID-ORCS" id="64096">
    <property type="hits" value="15 hits in 1139 CRISPR screens"/>
</dbReference>
<dbReference type="GenomeRNAi" id="64096"/>
<dbReference type="Pharos" id="Q9GZZ7">
    <property type="development level" value="Tbio"/>
</dbReference>
<dbReference type="PRO" id="PR:Q9GZZ7"/>
<dbReference type="Proteomes" id="UP000005640">
    <property type="component" value="Chromosome 20"/>
</dbReference>
<dbReference type="RNAct" id="Q9GZZ7">
    <property type="molecule type" value="protein"/>
</dbReference>
<dbReference type="Bgee" id="ENSG00000125861">
    <property type="expression patterns" value="Expressed in male germ line stem cell (sensu Vertebrata) in testis and 23 other cell types or tissues"/>
</dbReference>
<dbReference type="GO" id="GO:0009897">
    <property type="term" value="C:external side of plasma membrane"/>
    <property type="evidence" value="ECO:0000318"/>
    <property type="project" value="GO_Central"/>
</dbReference>
<dbReference type="GO" id="GO:0005576">
    <property type="term" value="C:extracellular region"/>
    <property type="evidence" value="ECO:0007669"/>
    <property type="project" value="UniProtKB-SubCell"/>
</dbReference>
<dbReference type="GO" id="GO:0005886">
    <property type="term" value="C:plasma membrane"/>
    <property type="evidence" value="ECO:0000314"/>
    <property type="project" value="UniProt"/>
</dbReference>
<dbReference type="GO" id="GO:0043235">
    <property type="term" value="C:receptor complex"/>
    <property type="evidence" value="ECO:0000318"/>
    <property type="project" value="GO_Central"/>
</dbReference>
<dbReference type="GO" id="GO:0016167">
    <property type="term" value="F:glial cell-derived neurotrophic factor receptor activity"/>
    <property type="evidence" value="ECO:0000314"/>
    <property type="project" value="UniProtKB"/>
</dbReference>
<dbReference type="GO" id="GO:0035860">
    <property type="term" value="P:glial cell-derived neurotrophic factor receptor signaling pathway"/>
    <property type="evidence" value="ECO:0000314"/>
    <property type="project" value="UniProtKB"/>
</dbReference>
<dbReference type="GO" id="GO:0030279">
    <property type="term" value="P:negative regulation of ossification"/>
    <property type="evidence" value="ECO:0007669"/>
    <property type="project" value="Ensembl"/>
</dbReference>
<dbReference type="GO" id="GO:0007399">
    <property type="term" value="P:nervous system development"/>
    <property type="evidence" value="ECO:0000318"/>
    <property type="project" value="GO_Central"/>
</dbReference>
<dbReference type="GO" id="GO:0001503">
    <property type="term" value="P:ossification"/>
    <property type="evidence" value="ECO:0007669"/>
    <property type="project" value="Ensembl"/>
</dbReference>
<dbReference type="FunFam" id="1.10.220.110:FF:000004">
    <property type="entry name" value="GDNF family receptor alpha 4"/>
    <property type="match status" value="1"/>
</dbReference>
<dbReference type="Gene3D" id="1.10.220.110">
    <property type="entry name" value="GDNF binding domain"/>
    <property type="match status" value="1"/>
</dbReference>
<dbReference type="InterPro" id="IPR016017">
    <property type="entry name" value="GDNF/GAS1"/>
</dbReference>
<dbReference type="InterPro" id="IPR037193">
    <property type="entry name" value="GDNF_alpha"/>
</dbReference>
<dbReference type="InterPro" id="IPR003438">
    <property type="entry name" value="GDNF_rcpt"/>
</dbReference>
<dbReference type="PANTHER" id="PTHR10269:SF2">
    <property type="entry name" value="GDNF FAMILY RECEPTOR ALPHA-4"/>
    <property type="match status" value="1"/>
</dbReference>
<dbReference type="PANTHER" id="PTHR10269">
    <property type="entry name" value="GDNF RECEPTOR ALPHA"/>
    <property type="match status" value="1"/>
</dbReference>
<dbReference type="Pfam" id="PF02351">
    <property type="entry name" value="GDNF"/>
    <property type="match status" value="2"/>
</dbReference>
<dbReference type="PRINTS" id="PR01316">
    <property type="entry name" value="GDNFRECEPTOR"/>
</dbReference>
<dbReference type="SMART" id="SM00907">
    <property type="entry name" value="GDNF"/>
    <property type="match status" value="2"/>
</dbReference>
<dbReference type="SUPFAM" id="SSF110035">
    <property type="entry name" value="GDNF receptor-like"/>
    <property type="match status" value="1"/>
</dbReference>